<sequence length="425" mass="46693">MNSASTHKNTDFWIFGLFFFLYFFIMATCFPFLPVWLSDVVGLSKTDTGIVFSCLSLFAISFQPLLGVISDRLGLKKNLIWSISLLLVFFAPFFLYVFAPLLHLNIWAGALTGGVFIGFVFSAGAGAIEAYIERVSRSSGFEYGKARMFGCLGWALCATMAGILFNVDPSLVFWMGSGGALLLLLLLYLARPSTSQTAMVMNALGANSSLISTRMVFSLFRMRQMWMFVLYTIGVACVYDVFDQQFAIFFRSFFDTPQAGIKAFGFATTAGEICNAIIMFCTPWIINRIGAKNTLLVAGGIMTIRITGSAFATTMTEVVILKMLHALEVPFLLVGAFKYITGVFDTRLSATVYLIGFQFSKQLAAILLSTFAGHLYDRMGFQNTYFVLGMIVLTVTVISAFTLSSSPGIVHPSVEKAPVAHSEIN</sequence>
<feature type="chain" id="PRO_0000196187" description="Raffinose permease">
    <location>
        <begin position="1"/>
        <end position="425"/>
    </location>
</feature>
<feature type="topological domain" description="Cytoplasmic" evidence="8">
    <location>
        <begin position="1"/>
        <end position="11"/>
    </location>
</feature>
<feature type="transmembrane region" description="Helical" evidence="2">
    <location>
        <begin position="12"/>
        <end position="32"/>
    </location>
</feature>
<feature type="topological domain" description="Periplasmic" evidence="8">
    <location>
        <begin position="33"/>
        <end position="48"/>
    </location>
</feature>
<feature type="transmembrane region" description="Helical" evidence="2">
    <location>
        <begin position="49"/>
        <end position="69"/>
    </location>
</feature>
<feature type="topological domain" description="Cytoplasmic" evidence="8">
    <location>
        <begin position="70"/>
        <end position="78"/>
    </location>
</feature>
<feature type="transmembrane region" description="Helical" evidence="2">
    <location>
        <begin position="79"/>
        <end position="99"/>
    </location>
</feature>
<feature type="topological domain" description="Periplasmic" evidence="8">
    <location>
        <begin position="100"/>
        <end position="105"/>
    </location>
</feature>
<feature type="transmembrane region" description="Helical" evidence="2">
    <location>
        <begin position="106"/>
        <end position="126"/>
    </location>
</feature>
<feature type="topological domain" description="Cytoplasmic" evidence="8">
    <location>
        <begin position="127"/>
        <end position="147"/>
    </location>
</feature>
<feature type="transmembrane region" description="Helical" evidence="2">
    <location>
        <begin position="148"/>
        <end position="168"/>
    </location>
</feature>
<feature type="topological domain" description="Periplasmic" evidence="8">
    <location>
        <position position="169"/>
    </location>
</feature>
<feature type="transmembrane region" description="Helical" evidence="2">
    <location>
        <begin position="170"/>
        <end position="190"/>
    </location>
</feature>
<feature type="topological domain" description="Cytoplasmic" evidence="8">
    <location>
        <begin position="191"/>
        <end position="229"/>
    </location>
</feature>
<feature type="transmembrane region" description="Helical" evidence="2">
    <location>
        <begin position="230"/>
        <end position="250"/>
    </location>
</feature>
<feature type="topological domain" description="Periplasmic" evidence="8">
    <location>
        <begin position="251"/>
        <end position="265"/>
    </location>
</feature>
<feature type="transmembrane region" description="Helical" evidence="2">
    <location>
        <begin position="266"/>
        <end position="286"/>
    </location>
</feature>
<feature type="topological domain" description="Cytoplasmic" evidence="8">
    <location>
        <begin position="287"/>
        <end position="294"/>
    </location>
</feature>
<feature type="transmembrane region" description="Helical" evidence="2">
    <location>
        <begin position="295"/>
        <end position="315"/>
    </location>
</feature>
<feature type="topological domain" description="Periplasmic" evidence="8">
    <location>
        <position position="316"/>
    </location>
</feature>
<feature type="transmembrane region" description="Helical" evidence="2">
    <location>
        <begin position="317"/>
        <end position="337"/>
    </location>
</feature>
<feature type="topological domain" description="Cytoplasmic" evidence="8">
    <location>
        <begin position="338"/>
        <end position="351"/>
    </location>
</feature>
<feature type="transmembrane region" description="Helical" evidence="2">
    <location>
        <begin position="352"/>
        <end position="372"/>
    </location>
</feature>
<feature type="topological domain" description="Periplasmic" evidence="8">
    <location>
        <begin position="373"/>
        <end position="383"/>
    </location>
</feature>
<feature type="transmembrane region" description="Helical" evidence="2">
    <location>
        <begin position="384"/>
        <end position="404"/>
    </location>
</feature>
<feature type="topological domain" description="Cytoplasmic" evidence="8">
    <location>
        <begin position="405"/>
        <end position="425"/>
    </location>
</feature>
<feature type="site" description="Substrate binding" evidence="1">
    <location>
        <position position="129"/>
    </location>
</feature>
<feature type="site" description="Substrate binding" evidence="1">
    <location>
        <position position="147"/>
    </location>
</feature>
<feature type="site" description="Substrate binding and proton translocation" evidence="1">
    <location>
        <position position="272"/>
    </location>
</feature>
<feature type="site" description="Proton translocation" evidence="1">
    <location>
        <position position="305"/>
    </location>
</feature>
<feature type="site" description="Proton translocation" evidence="1">
    <location>
        <position position="325"/>
    </location>
</feature>
<feature type="site" description="Proton translocation" evidence="1">
    <location>
        <position position="328"/>
    </location>
</feature>
<feature type="mutagenesis site" description="Significantly reduces raffinose transport, enhances maltose transport." evidence="3">
    <original>V</original>
    <variation>A</variation>
    <location>
        <position position="35"/>
    </location>
</feature>
<feature type="mutagenesis site" description="Significantly reduces raffinose transport, enhances maltose transport; when associated with L-139 and A-389." evidence="3">
    <original>S</original>
    <variation>D</variation>
    <location>
        <position position="138"/>
    </location>
</feature>
<feature type="mutagenesis site" description="Significantly reduces raffinose transport, enhances maltose transport; when associated with D-138 and A-389." evidence="3">
    <original>S</original>
    <variation>L</variation>
    <location>
        <position position="139"/>
    </location>
</feature>
<feature type="mutagenesis site" description="Significantly reduces raffinose transport, enhances maltose transport; when associated with D-138 and L-139." evidence="3">
    <original>G</original>
    <variation>A</variation>
    <location>
        <position position="389"/>
    </location>
</feature>
<feature type="mutagenesis site" description="Significantly reduces raffinose transport, enhances maltose transport." evidence="3">
    <original>I</original>
    <variation>S</variation>
    <location>
        <position position="391"/>
    </location>
</feature>
<evidence type="ECO:0000250" key="1">
    <source>
        <dbReference type="UniProtKB" id="P02920"/>
    </source>
</evidence>
<evidence type="ECO:0000255" key="2"/>
<evidence type="ECO:0000269" key="3">
    <source>
    </source>
</evidence>
<evidence type="ECO:0000269" key="4">
    <source>
    </source>
</evidence>
<evidence type="ECO:0000303" key="5">
    <source>
    </source>
</evidence>
<evidence type="ECO:0000303" key="6">
    <source>
    </source>
</evidence>
<evidence type="ECO:0000305" key="7"/>
<evidence type="ECO:0000305" key="8">
    <source>
    </source>
</evidence>
<geneLocation type="plasmid">
    <name>pRSD2</name>
</geneLocation>
<name>RAFB_ECOLX</name>
<accession>P16552</accession>
<proteinExistence type="evidence at protein level"/>
<protein>
    <recommendedName>
        <fullName evidence="5">Raffinose permease</fullName>
        <shortName evidence="6">Raf permease</shortName>
    </recommendedName>
</protein>
<gene>
    <name evidence="6" type="primary">rafB</name>
</gene>
<keyword id="KW-0997">Cell inner membrane</keyword>
<keyword id="KW-1003">Cell membrane</keyword>
<keyword id="KW-0472">Membrane</keyword>
<keyword id="KW-0614">Plasmid</keyword>
<keyword id="KW-0762">Sugar transport</keyword>
<keyword id="KW-0769">Symport</keyword>
<keyword id="KW-0812">Transmembrane</keyword>
<keyword id="KW-1133">Transmembrane helix</keyword>
<keyword id="KW-0813">Transport</keyword>
<dbReference type="EMBL" id="M27273">
    <property type="protein sequence ID" value="AAA24498.1"/>
    <property type="molecule type" value="Genomic_DNA"/>
</dbReference>
<dbReference type="PIR" id="B43717">
    <property type="entry name" value="B43717"/>
</dbReference>
<dbReference type="SMR" id="P16552"/>
<dbReference type="TCDB" id="2.A.1.5.2">
    <property type="family name" value="the major facilitator superfamily (mfs)"/>
</dbReference>
<dbReference type="GO" id="GO:0005886">
    <property type="term" value="C:plasma membrane"/>
    <property type="evidence" value="ECO:0007669"/>
    <property type="project" value="UniProtKB-SubCell"/>
</dbReference>
<dbReference type="GO" id="GO:0030395">
    <property type="term" value="F:lactose binding"/>
    <property type="evidence" value="ECO:0007669"/>
    <property type="project" value="TreeGrafter"/>
</dbReference>
<dbReference type="GO" id="GO:0015528">
    <property type="term" value="F:lactose:proton symporter activity"/>
    <property type="evidence" value="ECO:0007669"/>
    <property type="project" value="TreeGrafter"/>
</dbReference>
<dbReference type="CDD" id="cd06172">
    <property type="entry name" value="MFS_LacY"/>
    <property type="match status" value="1"/>
</dbReference>
<dbReference type="Gene3D" id="1.20.1250.20">
    <property type="entry name" value="MFS general substrate transporter like domains"/>
    <property type="match status" value="2"/>
</dbReference>
<dbReference type="InterPro" id="IPR000576">
    <property type="entry name" value="LacY/RafB_perm_fam"/>
</dbReference>
<dbReference type="InterPro" id="IPR018457">
    <property type="entry name" value="LacY/RafB_perm_fam_CS"/>
</dbReference>
<dbReference type="InterPro" id="IPR020846">
    <property type="entry name" value="MFS_dom"/>
</dbReference>
<dbReference type="InterPro" id="IPR036259">
    <property type="entry name" value="MFS_trans_sf"/>
</dbReference>
<dbReference type="NCBIfam" id="TIGR00882">
    <property type="entry name" value="2A0105"/>
    <property type="match status" value="1"/>
</dbReference>
<dbReference type="NCBIfam" id="NF007077">
    <property type="entry name" value="PRK09528.1"/>
    <property type="match status" value="1"/>
</dbReference>
<dbReference type="PANTHER" id="PTHR23522:SF10">
    <property type="entry name" value="3-PHENYLPROPIONIC ACID TRANSPORTER-RELATED"/>
    <property type="match status" value="1"/>
</dbReference>
<dbReference type="PANTHER" id="PTHR23522">
    <property type="entry name" value="BLL5896 PROTEIN"/>
    <property type="match status" value="1"/>
</dbReference>
<dbReference type="Pfam" id="PF01306">
    <property type="entry name" value="LacY_symp"/>
    <property type="match status" value="1"/>
</dbReference>
<dbReference type="PRINTS" id="PR00174">
    <property type="entry name" value="LACYSMPORT"/>
</dbReference>
<dbReference type="SUPFAM" id="SSF103473">
    <property type="entry name" value="MFS general substrate transporter"/>
    <property type="match status" value="1"/>
</dbReference>
<dbReference type="PROSITE" id="PS00896">
    <property type="entry name" value="LACY_1"/>
    <property type="match status" value="1"/>
</dbReference>
<dbReference type="PROSITE" id="PS00897">
    <property type="entry name" value="LACY_2"/>
    <property type="match status" value="1"/>
</dbReference>
<dbReference type="PROSITE" id="PS50850">
    <property type="entry name" value="MFS"/>
    <property type="match status" value="1"/>
</dbReference>
<organism>
    <name type="scientific">Escherichia coli</name>
    <dbReference type="NCBI Taxonomy" id="562"/>
    <lineage>
        <taxon>Bacteria</taxon>
        <taxon>Pseudomonadati</taxon>
        <taxon>Pseudomonadota</taxon>
        <taxon>Gammaproteobacteria</taxon>
        <taxon>Enterobacterales</taxon>
        <taxon>Enterobacteriaceae</taxon>
        <taxon>Escherichia</taxon>
    </lineage>
</organism>
<comment type="function">
    <text evidence="3 4">Responsible for transport of raffinose into the cell (PubMed:18008022, PubMed:2556373). Can also transport lactose and melibiose (PubMed:2556373). Has weak activity with maltose (PubMed:18008022).</text>
</comment>
<comment type="biophysicochemical properties">
    <kinetics>
        <KM evidence="4">1 mM for raffinose</KM>
        <KM evidence="4">0.6 mM for lactose</KM>
        <KM evidence="4">0.06 mM for melibiose</KM>
        <Vmax evidence="4">360.0 nmol/min/mg enzyme with raffinose as substrate</Vmax>
        <Vmax evidence="4">100.0 nmol/min/mg enzyme with lactose as substrate</Vmax>
        <Vmax evidence="4">37.0 nmol/min/mg enzyme with melibiose as substrate</Vmax>
    </kinetics>
</comment>
<comment type="subunit">
    <text evidence="1">Monomer.</text>
</comment>
<comment type="subcellular location">
    <subcellularLocation>
        <location evidence="7">Cell inner membrane</location>
        <topology evidence="2">Multi-pass membrane protein</topology>
    </subcellularLocation>
</comment>
<comment type="similarity">
    <text evidence="7">Belongs to the major facilitator superfamily. Oligosaccharide:H(+) symporter (OHS) (TC 2.A.1.5) family.</text>
</comment>
<reference key="1">
    <citation type="journal article" date="1989" name="J. Bacteriol.">
        <title>Nucleotide sequences and operon structure of plasmid-borne genes mediating uptake and utilization of raffinose in Escherichia coli.</title>
        <authorList>
            <person name="Aslanidis C."/>
            <person name="Schmid K."/>
            <person name="Schmitt R."/>
        </authorList>
    </citation>
    <scope>NUCLEOTIDE SEQUENCE [GENOMIC DNA]</scope>
    <scope>FUNCTION</scope>
    <scope>BIOPHYSICOCHEMICAL PROPERTIES</scope>
</reference>
<reference key="2">
    <citation type="journal article" date="2007" name="J. Membr. Biol.">
        <title>Amino acids that confer transport of raffinose and maltose sugars in the raffinose permease (RafB) of Escherichia coli as implicated by spontaneous mutations at Val-35, Ser-138, Ser-139, Gly-389 and Ile-391.</title>
        <authorList>
            <person name="Van Camp B.M."/>
            <person name="Crow R.R."/>
            <person name="Peng Y."/>
            <person name="Varela M.F."/>
        </authorList>
    </citation>
    <scope>FUNCTION</scope>
    <scope>MUTAGENESIS OF VAL-35; SER-138; SER-139; GLY-389 AND ILE-391</scope>
</reference>